<feature type="chain" id="PRO_1000100163" description="GTP cyclohydrolase 1">
    <location>
        <begin position="1"/>
        <end position="199"/>
    </location>
</feature>
<feature type="binding site" evidence="1">
    <location>
        <position position="89"/>
    </location>
    <ligand>
        <name>Zn(2+)</name>
        <dbReference type="ChEBI" id="CHEBI:29105"/>
    </ligand>
</feature>
<feature type="binding site" evidence="1">
    <location>
        <position position="92"/>
    </location>
    <ligand>
        <name>Zn(2+)</name>
        <dbReference type="ChEBI" id="CHEBI:29105"/>
    </ligand>
</feature>
<feature type="binding site" evidence="1">
    <location>
        <position position="161"/>
    </location>
    <ligand>
        <name>Zn(2+)</name>
        <dbReference type="ChEBI" id="CHEBI:29105"/>
    </ligand>
</feature>
<gene>
    <name evidence="1" type="primary">folE</name>
    <name type="ordered locus">BLD_1850</name>
</gene>
<organism>
    <name type="scientific">Bifidobacterium longum (strain DJO10A)</name>
    <dbReference type="NCBI Taxonomy" id="205913"/>
    <lineage>
        <taxon>Bacteria</taxon>
        <taxon>Bacillati</taxon>
        <taxon>Actinomycetota</taxon>
        <taxon>Actinomycetes</taxon>
        <taxon>Bifidobacteriales</taxon>
        <taxon>Bifidobacteriaceae</taxon>
        <taxon>Bifidobacterium</taxon>
    </lineage>
</organism>
<protein>
    <recommendedName>
        <fullName evidence="1">GTP cyclohydrolase 1</fullName>
        <ecNumber evidence="1">3.5.4.16</ecNumber>
    </recommendedName>
    <alternativeName>
        <fullName evidence="1">GTP cyclohydrolase I</fullName>
        <shortName evidence="1">GTP-CH-I</shortName>
    </alternativeName>
</protein>
<reference key="1">
    <citation type="journal article" date="2008" name="BMC Genomics">
        <title>Comparative genomic analysis of the gut bacterium Bifidobacterium longum reveals loci susceptible to deletion during pure culture growth.</title>
        <authorList>
            <person name="Lee J.H."/>
            <person name="Karamychev V.N."/>
            <person name="Kozyavkin S.A."/>
            <person name="Mills D."/>
            <person name="Pavlov A.R."/>
            <person name="Pavlova N.V."/>
            <person name="Polouchine N.N."/>
            <person name="Richardson P.M."/>
            <person name="Shakhova V.V."/>
            <person name="Slesarev A.I."/>
            <person name="Weimer B."/>
            <person name="O'Sullivan D.J."/>
        </authorList>
    </citation>
    <scope>NUCLEOTIDE SEQUENCE [LARGE SCALE GENOMIC DNA]</scope>
    <source>
        <strain>DJO10A</strain>
    </source>
</reference>
<keyword id="KW-0342">GTP-binding</keyword>
<keyword id="KW-0378">Hydrolase</keyword>
<keyword id="KW-0479">Metal-binding</keyword>
<keyword id="KW-0547">Nucleotide-binding</keyword>
<keyword id="KW-0554">One-carbon metabolism</keyword>
<keyword id="KW-0862">Zinc</keyword>
<sequence>MNEYIESCQQEKRTYDEEGVREAVRLFLKSIGEDPGREGLVETPDRIARACRELFAGLQASPADVLEKHFDVDTDELVLVKDIELYSVCEHHLLPFHGVAHVGYIPAKDGVMGLSKLARLVEVYARRPQVQERLTQQIADALVEYAGARGVIVVTECEHLCMSMRGIKKSSARTVTSAVRGLLRNPATRAEAMSLILDK</sequence>
<proteinExistence type="inferred from homology"/>
<dbReference type="EC" id="3.5.4.16" evidence="1"/>
<dbReference type="EMBL" id="CP000605">
    <property type="protein sequence ID" value="ACD99295.1"/>
    <property type="molecule type" value="Genomic_DNA"/>
</dbReference>
<dbReference type="RefSeq" id="WP_010081418.1">
    <property type="nucleotide sequence ID" value="NZ_AABM02000014.1"/>
</dbReference>
<dbReference type="SMR" id="B3DR12"/>
<dbReference type="KEGG" id="blj:BLD_1850"/>
<dbReference type="HOGENOM" id="CLU_049768_3_3_11"/>
<dbReference type="UniPathway" id="UPA00848">
    <property type="reaction ID" value="UER00151"/>
</dbReference>
<dbReference type="Proteomes" id="UP000002419">
    <property type="component" value="Chromosome"/>
</dbReference>
<dbReference type="GO" id="GO:0005737">
    <property type="term" value="C:cytoplasm"/>
    <property type="evidence" value="ECO:0007669"/>
    <property type="project" value="TreeGrafter"/>
</dbReference>
<dbReference type="GO" id="GO:0005525">
    <property type="term" value="F:GTP binding"/>
    <property type="evidence" value="ECO:0007669"/>
    <property type="project" value="UniProtKB-KW"/>
</dbReference>
<dbReference type="GO" id="GO:0003934">
    <property type="term" value="F:GTP cyclohydrolase I activity"/>
    <property type="evidence" value="ECO:0007669"/>
    <property type="project" value="UniProtKB-UniRule"/>
</dbReference>
<dbReference type="GO" id="GO:0008270">
    <property type="term" value="F:zinc ion binding"/>
    <property type="evidence" value="ECO:0007669"/>
    <property type="project" value="UniProtKB-UniRule"/>
</dbReference>
<dbReference type="GO" id="GO:0006730">
    <property type="term" value="P:one-carbon metabolic process"/>
    <property type="evidence" value="ECO:0007669"/>
    <property type="project" value="UniProtKB-UniRule"/>
</dbReference>
<dbReference type="GO" id="GO:0006729">
    <property type="term" value="P:tetrahydrobiopterin biosynthetic process"/>
    <property type="evidence" value="ECO:0007669"/>
    <property type="project" value="TreeGrafter"/>
</dbReference>
<dbReference type="GO" id="GO:0046654">
    <property type="term" value="P:tetrahydrofolate biosynthetic process"/>
    <property type="evidence" value="ECO:0007669"/>
    <property type="project" value="UniProtKB-UniRule"/>
</dbReference>
<dbReference type="FunFam" id="3.30.1130.10:FF:000001">
    <property type="entry name" value="GTP cyclohydrolase 1"/>
    <property type="match status" value="1"/>
</dbReference>
<dbReference type="Gene3D" id="1.10.286.10">
    <property type="match status" value="1"/>
</dbReference>
<dbReference type="Gene3D" id="3.30.1130.10">
    <property type="match status" value="1"/>
</dbReference>
<dbReference type="HAMAP" id="MF_00223">
    <property type="entry name" value="FolE"/>
    <property type="match status" value="1"/>
</dbReference>
<dbReference type="InterPro" id="IPR043133">
    <property type="entry name" value="GTP-CH-I_C/QueF"/>
</dbReference>
<dbReference type="InterPro" id="IPR043134">
    <property type="entry name" value="GTP-CH-I_N"/>
</dbReference>
<dbReference type="InterPro" id="IPR001474">
    <property type="entry name" value="GTP_CycHdrlase_I"/>
</dbReference>
<dbReference type="InterPro" id="IPR018234">
    <property type="entry name" value="GTP_CycHdrlase_I_CS"/>
</dbReference>
<dbReference type="InterPro" id="IPR020602">
    <property type="entry name" value="GTP_CycHdrlase_I_dom"/>
</dbReference>
<dbReference type="NCBIfam" id="TIGR00063">
    <property type="entry name" value="folE"/>
    <property type="match status" value="1"/>
</dbReference>
<dbReference type="NCBIfam" id="NF006825">
    <property type="entry name" value="PRK09347.1-2"/>
    <property type="match status" value="1"/>
</dbReference>
<dbReference type="NCBIfam" id="NF006826">
    <property type="entry name" value="PRK09347.1-3"/>
    <property type="match status" value="1"/>
</dbReference>
<dbReference type="PANTHER" id="PTHR11109:SF7">
    <property type="entry name" value="GTP CYCLOHYDROLASE 1"/>
    <property type="match status" value="1"/>
</dbReference>
<dbReference type="PANTHER" id="PTHR11109">
    <property type="entry name" value="GTP CYCLOHYDROLASE I"/>
    <property type="match status" value="1"/>
</dbReference>
<dbReference type="Pfam" id="PF01227">
    <property type="entry name" value="GTP_cyclohydroI"/>
    <property type="match status" value="1"/>
</dbReference>
<dbReference type="SUPFAM" id="SSF55620">
    <property type="entry name" value="Tetrahydrobiopterin biosynthesis enzymes-like"/>
    <property type="match status" value="1"/>
</dbReference>
<dbReference type="PROSITE" id="PS00859">
    <property type="entry name" value="GTP_CYCLOHYDROL_1_1"/>
    <property type="match status" value="1"/>
</dbReference>
<dbReference type="PROSITE" id="PS00860">
    <property type="entry name" value="GTP_CYCLOHYDROL_1_2"/>
    <property type="match status" value="1"/>
</dbReference>
<accession>B3DR12</accession>
<comment type="catalytic activity">
    <reaction evidence="1">
        <text>GTP + H2O = 7,8-dihydroneopterin 3'-triphosphate + formate + H(+)</text>
        <dbReference type="Rhea" id="RHEA:17473"/>
        <dbReference type="ChEBI" id="CHEBI:15377"/>
        <dbReference type="ChEBI" id="CHEBI:15378"/>
        <dbReference type="ChEBI" id="CHEBI:15740"/>
        <dbReference type="ChEBI" id="CHEBI:37565"/>
        <dbReference type="ChEBI" id="CHEBI:58462"/>
        <dbReference type="EC" id="3.5.4.16"/>
    </reaction>
</comment>
<comment type="pathway">
    <text evidence="1">Cofactor biosynthesis; 7,8-dihydroneopterin triphosphate biosynthesis; 7,8-dihydroneopterin triphosphate from GTP: step 1/1.</text>
</comment>
<comment type="subunit">
    <text evidence="1">Homomer.</text>
</comment>
<comment type="similarity">
    <text evidence="1">Belongs to the GTP cyclohydrolase I family.</text>
</comment>
<name>GCH1_BIFLD</name>
<evidence type="ECO:0000255" key="1">
    <source>
        <dbReference type="HAMAP-Rule" id="MF_00223"/>
    </source>
</evidence>